<organism>
    <name type="scientific">Histophilus somni (strain 2336)</name>
    <name type="common">Haemophilus somnus</name>
    <dbReference type="NCBI Taxonomy" id="228400"/>
    <lineage>
        <taxon>Bacteria</taxon>
        <taxon>Pseudomonadati</taxon>
        <taxon>Pseudomonadota</taxon>
        <taxon>Gammaproteobacteria</taxon>
        <taxon>Pasteurellales</taxon>
        <taxon>Pasteurellaceae</taxon>
        <taxon>Histophilus</taxon>
    </lineage>
</organism>
<evidence type="ECO:0000255" key="1">
    <source>
        <dbReference type="HAMAP-Rule" id="MF_00109"/>
    </source>
</evidence>
<dbReference type="EC" id="2.7.1.71" evidence="1"/>
<dbReference type="EMBL" id="CP000947">
    <property type="protein sequence ID" value="ACA30781.1"/>
    <property type="molecule type" value="Genomic_DNA"/>
</dbReference>
<dbReference type="RefSeq" id="WP_012340254.1">
    <property type="nucleotide sequence ID" value="NC_010519.1"/>
</dbReference>
<dbReference type="SMR" id="B0UTE7"/>
<dbReference type="STRING" id="228400.HSM_1066"/>
<dbReference type="GeneID" id="31487366"/>
<dbReference type="KEGG" id="hsm:HSM_1066"/>
<dbReference type="HOGENOM" id="CLU_057607_2_2_6"/>
<dbReference type="UniPathway" id="UPA00053">
    <property type="reaction ID" value="UER00088"/>
</dbReference>
<dbReference type="GO" id="GO:0005829">
    <property type="term" value="C:cytosol"/>
    <property type="evidence" value="ECO:0007669"/>
    <property type="project" value="TreeGrafter"/>
</dbReference>
<dbReference type="GO" id="GO:0005524">
    <property type="term" value="F:ATP binding"/>
    <property type="evidence" value="ECO:0007669"/>
    <property type="project" value="UniProtKB-UniRule"/>
</dbReference>
<dbReference type="GO" id="GO:0000287">
    <property type="term" value="F:magnesium ion binding"/>
    <property type="evidence" value="ECO:0007669"/>
    <property type="project" value="UniProtKB-UniRule"/>
</dbReference>
<dbReference type="GO" id="GO:0004765">
    <property type="term" value="F:shikimate kinase activity"/>
    <property type="evidence" value="ECO:0007669"/>
    <property type="project" value="UniProtKB-UniRule"/>
</dbReference>
<dbReference type="GO" id="GO:0008652">
    <property type="term" value="P:amino acid biosynthetic process"/>
    <property type="evidence" value="ECO:0007669"/>
    <property type="project" value="UniProtKB-KW"/>
</dbReference>
<dbReference type="GO" id="GO:0009073">
    <property type="term" value="P:aromatic amino acid family biosynthetic process"/>
    <property type="evidence" value="ECO:0007669"/>
    <property type="project" value="UniProtKB-KW"/>
</dbReference>
<dbReference type="GO" id="GO:0009423">
    <property type="term" value="P:chorismate biosynthetic process"/>
    <property type="evidence" value="ECO:0007669"/>
    <property type="project" value="UniProtKB-UniRule"/>
</dbReference>
<dbReference type="CDD" id="cd00464">
    <property type="entry name" value="SK"/>
    <property type="match status" value="1"/>
</dbReference>
<dbReference type="FunFam" id="3.40.50.300:FF:000099">
    <property type="entry name" value="Shikimate kinase 1"/>
    <property type="match status" value="1"/>
</dbReference>
<dbReference type="Gene3D" id="3.40.50.300">
    <property type="entry name" value="P-loop containing nucleotide triphosphate hydrolases"/>
    <property type="match status" value="1"/>
</dbReference>
<dbReference type="HAMAP" id="MF_00109">
    <property type="entry name" value="Shikimate_kinase"/>
    <property type="match status" value="1"/>
</dbReference>
<dbReference type="InterPro" id="IPR027417">
    <property type="entry name" value="P-loop_NTPase"/>
</dbReference>
<dbReference type="InterPro" id="IPR031322">
    <property type="entry name" value="Shikimate/glucono_kinase"/>
</dbReference>
<dbReference type="InterPro" id="IPR000623">
    <property type="entry name" value="Shikimate_kinase/TSH1"/>
</dbReference>
<dbReference type="InterPro" id="IPR023000">
    <property type="entry name" value="Shikimate_kinase_CS"/>
</dbReference>
<dbReference type="NCBIfam" id="NF003456">
    <property type="entry name" value="PRK05057.1"/>
    <property type="match status" value="1"/>
</dbReference>
<dbReference type="PANTHER" id="PTHR21087">
    <property type="entry name" value="SHIKIMATE KINASE"/>
    <property type="match status" value="1"/>
</dbReference>
<dbReference type="PANTHER" id="PTHR21087:SF16">
    <property type="entry name" value="SHIKIMATE KINASE 1, CHLOROPLASTIC"/>
    <property type="match status" value="1"/>
</dbReference>
<dbReference type="Pfam" id="PF01202">
    <property type="entry name" value="SKI"/>
    <property type="match status" value="1"/>
</dbReference>
<dbReference type="PRINTS" id="PR01100">
    <property type="entry name" value="SHIKIMTKNASE"/>
</dbReference>
<dbReference type="SUPFAM" id="SSF52540">
    <property type="entry name" value="P-loop containing nucleoside triphosphate hydrolases"/>
    <property type="match status" value="1"/>
</dbReference>
<dbReference type="PROSITE" id="PS01128">
    <property type="entry name" value="SHIKIMATE_KINASE"/>
    <property type="match status" value="1"/>
</dbReference>
<sequence>MAEKRNIFLVGPMGAGKSTIGRQLAQILGMEFIDTDAEIEQRAGADISWIFDVEGEEGFRKREERIINELTQKQGIVLSTGGGAIVSKDNRNYLSARGTVIYLETTVEKQFQRTQRDKKRPLLQNVEDPRQVLEDLAKVRNPLYEEVADIILPTDEQSAKLMANQIIDLIDNLKI</sequence>
<gene>
    <name evidence="1" type="primary">aroK</name>
    <name type="ordered locus">HSM_1066</name>
</gene>
<reference key="1">
    <citation type="submission" date="2008-02" db="EMBL/GenBank/DDBJ databases">
        <title>Complete sequence of Haemophilus somnus 2336.</title>
        <authorList>
            <consortium name="US DOE Joint Genome Institute"/>
            <person name="Siddaramappa S."/>
            <person name="Duncan A.J."/>
            <person name="Challacombe J.F."/>
            <person name="Rainey D."/>
            <person name="Gillaspy A.F."/>
            <person name="Carson M."/>
            <person name="Gipson J."/>
            <person name="Gipson M."/>
            <person name="Bruce D."/>
            <person name="Detter J.C."/>
            <person name="Han C.S."/>
            <person name="Land M."/>
            <person name="Tapia R."/>
            <person name="Thompson L.S."/>
            <person name="Orvis J."/>
            <person name="Zaitshik J."/>
            <person name="Barnes G."/>
            <person name="Brettin T.S."/>
            <person name="Dyer D.W."/>
            <person name="Inzana T.J."/>
        </authorList>
    </citation>
    <scope>NUCLEOTIDE SEQUENCE [LARGE SCALE GENOMIC DNA]</scope>
    <source>
        <strain>2336</strain>
    </source>
</reference>
<feature type="chain" id="PRO_1000075952" description="Shikimate kinase">
    <location>
        <begin position="1"/>
        <end position="175"/>
    </location>
</feature>
<feature type="binding site" evidence="1">
    <location>
        <begin position="14"/>
        <end position="19"/>
    </location>
    <ligand>
        <name>ATP</name>
        <dbReference type="ChEBI" id="CHEBI:30616"/>
    </ligand>
</feature>
<feature type="binding site" evidence="1">
    <location>
        <position position="18"/>
    </location>
    <ligand>
        <name>Mg(2+)</name>
        <dbReference type="ChEBI" id="CHEBI:18420"/>
    </ligand>
</feature>
<feature type="binding site" evidence="1">
    <location>
        <position position="36"/>
    </location>
    <ligand>
        <name>substrate</name>
    </ligand>
</feature>
<feature type="binding site" evidence="1">
    <location>
        <position position="60"/>
    </location>
    <ligand>
        <name>substrate</name>
    </ligand>
</feature>
<feature type="binding site" evidence="1">
    <location>
        <position position="82"/>
    </location>
    <ligand>
        <name>substrate</name>
    </ligand>
</feature>
<feature type="binding site" evidence="1">
    <location>
        <position position="120"/>
    </location>
    <ligand>
        <name>ATP</name>
        <dbReference type="ChEBI" id="CHEBI:30616"/>
    </ligand>
</feature>
<feature type="binding site" evidence="1">
    <location>
        <position position="140"/>
    </location>
    <ligand>
        <name>substrate</name>
    </ligand>
</feature>
<feature type="binding site" evidence="1">
    <location>
        <position position="157"/>
    </location>
    <ligand>
        <name>ATP</name>
        <dbReference type="ChEBI" id="CHEBI:30616"/>
    </ligand>
</feature>
<keyword id="KW-0028">Amino-acid biosynthesis</keyword>
<keyword id="KW-0057">Aromatic amino acid biosynthesis</keyword>
<keyword id="KW-0067">ATP-binding</keyword>
<keyword id="KW-0963">Cytoplasm</keyword>
<keyword id="KW-0418">Kinase</keyword>
<keyword id="KW-0460">Magnesium</keyword>
<keyword id="KW-0479">Metal-binding</keyword>
<keyword id="KW-0547">Nucleotide-binding</keyword>
<keyword id="KW-0808">Transferase</keyword>
<comment type="function">
    <text evidence="1">Catalyzes the specific phosphorylation of the 3-hydroxyl group of shikimic acid using ATP as a cosubstrate.</text>
</comment>
<comment type="catalytic activity">
    <reaction evidence="1">
        <text>shikimate + ATP = 3-phosphoshikimate + ADP + H(+)</text>
        <dbReference type="Rhea" id="RHEA:13121"/>
        <dbReference type="ChEBI" id="CHEBI:15378"/>
        <dbReference type="ChEBI" id="CHEBI:30616"/>
        <dbReference type="ChEBI" id="CHEBI:36208"/>
        <dbReference type="ChEBI" id="CHEBI:145989"/>
        <dbReference type="ChEBI" id="CHEBI:456216"/>
        <dbReference type="EC" id="2.7.1.71"/>
    </reaction>
</comment>
<comment type="cofactor">
    <cofactor evidence="1">
        <name>Mg(2+)</name>
        <dbReference type="ChEBI" id="CHEBI:18420"/>
    </cofactor>
    <text evidence="1">Binds 1 Mg(2+) ion per subunit.</text>
</comment>
<comment type="pathway">
    <text evidence="1">Metabolic intermediate biosynthesis; chorismate biosynthesis; chorismate from D-erythrose 4-phosphate and phosphoenolpyruvate: step 5/7.</text>
</comment>
<comment type="subunit">
    <text evidence="1">Monomer.</text>
</comment>
<comment type="subcellular location">
    <subcellularLocation>
        <location evidence="1">Cytoplasm</location>
    </subcellularLocation>
</comment>
<comment type="similarity">
    <text evidence="1">Belongs to the shikimate kinase family.</text>
</comment>
<accession>B0UTE7</accession>
<name>AROK_HISS2</name>
<protein>
    <recommendedName>
        <fullName evidence="1">Shikimate kinase</fullName>
        <shortName evidence="1">SK</shortName>
        <ecNumber evidence="1">2.7.1.71</ecNumber>
    </recommendedName>
</protein>
<proteinExistence type="inferred from homology"/>